<dbReference type="PIR" id="A01702">
    <property type="entry name" value="N1AW1"/>
</dbReference>
<dbReference type="SMR" id="P01434"/>
<dbReference type="GO" id="GO:0005576">
    <property type="term" value="C:extracellular region"/>
    <property type="evidence" value="ECO:0007669"/>
    <property type="project" value="UniProtKB-SubCell"/>
</dbReference>
<dbReference type="GO" id="GO:0030550">
    <property type="term" value="F:acetylcholine receptor inhibitor activity"/>
    <property type="evidence" value="ECO:0007669"/>
    <property type="project" value="UniProtKB-KW"/>
</dbReference>
<dbReference type="GO" id="GO:0099106">
    <property type="term" value="F:ion channel regulator activity"/>
    <property type="evidence" value="ECO:0007669"/>
    <property type="project" value="UniProtKB-KW"/>
</dbReference>
<dbReference type="GO" id="GO:0090729">
    <property type="term" value="F:toxin activity"/>
    <property type="evidence" value="ECO:0007669"/>
    <property type="project" value="UniProtKB-KW"/>
</dbReference>
<dbReference type="CDD" id="cd00206">
    <property type="entry name" value="TFP_snake_toxin"/>
    <property type="match status" value="1"/>
</dbReference>
<dbReference type="FunFam" id="2.10.60.10:FF:000024">
    <property type="entry name" value="Cytotoxin 1"/>
    <property type="match status" value="1"/>
</dbReference>
<dbReference type="Gene3D" id="2.10.60.10">
    <property type="entry name" value="CD59"/>
    <property type="match status" value="1"/>
</dbReference>
<dbReference type="InterPro" id="IPR003571">
    <property type="entry name" value="Snake_3FTx"/>
</dbReference>
<dbReference type="InterPro" id="IPR045860">
    <property type="entry name" value="Snake_toxin-like_sf"/>
</dbReference>
<dbReference type="InterPro" id="IPR018354">
    <property type="entry name" value="Snake_toxin_con_site"/>
</dbReference>
<dbReference type="InterPro" id="IPR054131">
    <property type="entry name" value="Toxin_cobra-type"/>
</dbReference>
<dbReference type="Pfam" id="PF21947">
    <property type="entry name" value="Toxin_cobra-type"/>
    <property type="match status" value="1"/>
</dbReference>
<dbReference type="SUPFAM" id="SSF57302">
    <property type="entry name" value="Snake toxin-like"/>
    <property type="match status" value="1"/>
</dbReference>
<dbReference type="PROSITE" id="PS00272">
    <property type="entry name" value="SNAKE_TOXIN"/>
    <property type="match status" value="1"/>
</dbReference>
<proteinExistence type="evidence at protein level"/>
<accession>P01434</accession>
<reference key="1">
    <citation type="journal article" date="1981" name="Biochem. J.">
        <title>The amino acid sequence and position of the free thiol group of a short-chain neurotoxin from common-death-adder (Acanthophis antarcticus) venom.</title>
        <authorList>
            <person name="Kim H.S."/>
            <person name="Tamiya N."/>
        </authorList>
    </citation>
    <scope>PROTEIN SEQUENCE</scope>
    <scope>TOXIC DOSE</scope>
    <scope>SUBCELLULAR LOCATION</scope>
    <source>
        <tissue>Venom</tissue>
    </source>
</reference>
<sequence>MQCCNQQSSQPKTTTTCPGGVSSCYKKTWRDHRGTIIERGCGCPRVKPGIRLICCKTDECNN</sequence>
<evidence type="ECO:0000250" key="1">
    <source>
        <dbReference type="UniProtKB" id="P0C1Z0"/>
    </source>
</evidence>
<evidence type="ECO:0000250" key="2">
    <source>
        <dbReference type="UniProtKB" id="P60775"/>
    </source>
</evidence>
<evidence type="ECO:0000256" key="3">
    <source>
        <dbReference type="SAM" id="MobiDB-lite"/>
    </source>
</evidence>
<evidence type="ECO:0000269" key="4">
    <source>
    </source>
</evidence>
<evidence type="ECO:0000305" key="5"/>
<keyword id="KW-0008">Acetylcholine receptor inhibiting toxin</keyword>
<keyword id="KW-0903">Direct protein sequencing</keyword>
<keyword id="KW-1015">Disulfide bond</keyword>
<keyword id="KW-0872">Ion channel impairing toxin</keyword>
<keyword id="KW-0528">Neurotoxin</keyword>
<keyword id="KW-0629">Postsynaptic neurotoxin</keyword>
<keyword id="KW-0964">Secreted</keyword>
<keyword id="KW-0800">Toxin</keyword>
<organism>
    <name type="scientific">Acanthophis antarcticus</name>
    <name type="common">Common death adder</name>
    <dbReference type="NCBI Taxonomy" id="8605"/>
    <lineage>
        <taxon>Eukaryota</taxon>
        <taxon>Metazoa</taxon>
        <taxon>Chordata</taxon>
        <taxon>Craniata</taxon>
        <taxon>Vertebrata</taxon>
        <taxon>Euteleostomi</taxon>
        <taxon>Lepidosauria</taxon>
        <taxon>Squamata</taxon>
        <taxon>Bifurcata</taxon>
        <taxon>Unidentata</taxon>
        <taxon>Episquamata</taxon>
        <taxon>Toxicofera</taxon>
        <taxon>Serpentes</taxon>
        <taxon>Colubroidea</taxon>
        <taxon>Elapidae</taxon>
        <taxon>Hydrophiinae</taxon>
        <taxon>Acanthophis</taxon>
    </lineage>
</organism>
<name>3S11_ACAAN</name>
<feature type="chain" id="PRO_0000093564" description="Short neurotoxin 1" evidence="4">
    <location>
        <begin position="1"/>
        <end position="62"/>
    </location>
</feature>
<feature type="region of interest" description="Disordered" evidence="3">
    <location>
        <begin position="1"/>
        <end position="20"/>
    </location>
</feature>
<feature type="compositionally biased region" description="Polar residues" evidence="3">
    <location>
        <begin position="1"/>
        <end position="17"/>
    </location>
</feature>
<feature type="disulfide bond" evidence="1">
    <location>
        <begin position="3"/>
        <end position="24"/>
    </location>
</feature>
<feature type="disulfide bond" evidence="1">
    <location>
        <begin position="17"/>
        <end position="41"/>
    </location>
</feature>
<feature type="disulfide bond" evidence="1">
    <location>
        <begin position="43"/>
        <end position="54"/>
    </location>
</feature>
<feature type="disulfide bond" evidence="1">
    <location>
        <begin position="55"/>
        <end position="60"/>
    </location>
</feature>
<protein>
    <recommendedName>
        <fullName>Short neurotoxin 1</fullName>
    </recommendedName>
    <alternativeName>
        <fullName>Toxin Aa c</fullName>
    </alternativeName>
</protein>
<comment type="function">
    <text evidence="2">Binds to muscle nicotinic acetylcholine receptor (nAChR) and inhibit acetylcholine from binding to the receptor, thereby impairing neuromuscular transmission.</text>
</comment>
<comment type="subcellular location">
    <subcellularLocation>
        <location evidence="4">Secreted</location>
    </subcellularLocation>
</comment>
<comment type="tissue specificity">
    <text evidence="5">Expressed by the venom gland.</text>
</comment>
<comment type="toxic dose">
    <text evidence="4">LD(50) is 0.08 mg/kg by intramuscular injection into mice.</text>
</comment>
<comment type="similarity">
    <text evidence="5">Belongs to the three-finger toxin family. Short-chain subfamily. Type I alpha-neurotoxin sub-subfamily.</text>
</comment>